<protein>
    <recommendedName>
        <fullName>Bifunctional lysine-specific demethylase and histidyl-hydroxylase NO66</fullName>
        <ecNumber>1.14.11.-</ecNumber>
        <ecNumber>1.14.11.27</ecNumber>
    </recommendedName>
    <alternativeName>
        <fullName>Histone lysine demethylase NO66</fullName>
    </alternativeName>
    <alternativeName>
        <fullName>Jumanjic domain protein 1</fullName>
    </alternativeName>
</protein>
<sequence>MGKKKNSNKSAAAAPAVKHNDRWSSIELGEAKSAAVSHYKEPSKEPKFVHPAKLEKVKRIHDGLNIDRVLSHGPVPKQNGGTKRKHVEVTTQKLENKKPKVEVKKEDEKSKNKKMKNQNKHTALVQNETSTRSTYFVEEPDNENKVTLISNGREIAFKKTEVVESDDEQMIGLDSDEELEDEDETDIDEDEMMIDPKDIERYINFESVEDEEDMEDEEIEDEEFEDEEFEDEEEEADEQEEEEEDVSDEESVVSEMDADSDDEGFIAGKDREAHVISKDKFTRNAPAVDFDKFPFTDEDSVVTSSRAFGFMISPCDVQTFFDKFYQSNVLVVRRKQPTYFGNLFSTARLGELLEKNHLEYGRNINIAQYKNGVRTTLNGQGRAYPQIVKQHLHNMCSVQLVNPQTYDDRIWYLCEVIQEQFGCFVGANTYLTPAGSSGFAPHWDEIDAFLLQVEGRKYWRVWAPESAEEELPLESSDNFTEDDMKGREPVFEGWIEKGDMIYIPRGYIHQARTDSKVHSLHVTVSTGRQWSFANLMEKVVPEAIGVLTDTRHKLRRGLPTGLFDMGGVIDLDYSQEDHFVEKFKMVVDRHMSMLRNLVADQLLESSVDSLAKEFMKQALPPRLTEQEKKLSVLGSSTNLLGDDLVDFTARTKVRLIRRHTQRLLMESEDACFISHRINNSRLFEGRPEQIVEYPISGIDAYRVLSNSYPEWRTLYEIFSLRETKTKSRKENLAAIQLLFQIGVLLVKN</sequence>
<accession>O01658</accession>
<accession>G8XYY5</accession>
<proteinExistence type="inferred from homology"/>
<name>NO66_CAEEL</name>
<feature type="chain" id="PRO_0000390981" description="Bifunctional lysine-specific demethylase and histidyl-hydroxylase NO66">
    <location>
        <begin position="1"/>
        <end position="748"/>
    </location>
</feature>
<feature type="domain" description="JmjC" evidence="2">
    <location>
        <begin position="399"/>
        <end position="543"/>
    </location>
</feature>
<feature type="region of interest" description="Disordered" evidence="3">
    <location>
        <begin position="65"/>
        <end position="135"/>
    </location>
</feature>
<feature type="region of interest" description="Disordered" evidence="3">
    <location>
        <begin position="160"/>
        <end position="264"/>
    </location>
</feature>
<feature type="compositionally biased region" description="Basic and acidic residues" evidence="3">
    <location>
        <begin position="94"/>
        <end position="110"/>
    </location>
</feature>
<feature type="compositionally biased region" description="Polar residues" evidence="3">
    <location>
        <begin position="124"/>
        <end position="134"/>
    </location>
</feature>
<feature type="compositionally biased region" description="Acidic residues" evidence="3">
    <location>
        <begin position="163"/>
        <end position="193"/>
    </location>
</feature>
<feature type="compositionally biased region" description="Basic and acidic residues" evidence="3">
    <location>
        <begin position="194"/>
        <end position="203"/>
    </location>
</feature>
<feature type="compositionally biased region" description="Acidic residues" evidence="3">
    <location>
        <begin position="207"/>
        <end position="264"/>
    </location>
</feature>
<feature type="binding site" evidence="2">
    <location>
        <position position="442"/>
    </location>
    <ligand>
        <name>Fe cation</name>
        <dbReference type="ChEBI" id="CHEBI:24875"/>
        <note>catalytic</note>
    </ligand>
</feature>
<feature type="binding site" evidence="2">
    <location>
        <position position="444"/>
    </location>
    <ligand>
        <name>Fe cation</name>
        <dbReference type="ChEBI" id="CHEBI:24875"/>
        <note>catalytic</note>
    </ligand>
</feature>
<feature type="binding site" evidence="2">
    <location>
        <position position="509"/>
    </location>
    <ligand>
        <name>Fe cation</name>
        <dbReference type="ChEBI" id="CHEBI:24875"/>
        <note>catalytic</note>
    </ligand>
</feature>
<feature type="splice variant" id="VSP_053839" description="In isoform b." evidence="5">
    <original>HTALV</original>
    <variation>RTAAS</variation>
    <location>
        <begin position="121"/>
        <end position="125"/>
    </location>
</feature>
<feature type="splice variant" id="VSP_053840" description="In isoform b." evidence="5">
    <location>
        <begin position="126"/>
        <end position="748"/>
    </location>
</feature>
<reference key="1">
    <citation type="journal article" date="1998" name="Science">
        <title>Genome sequence of the nematode C. elegans: a platform for investigating biology.</title>
        <authorList>
            <consortium name="The C. elegans sequencing consortium"/>
        </authorList>
    </citation>
    <scope>NUCLEOTIDE SEQUENCE [LARGE SCALE GENOMIC DNA]</scope>
    <scope>ALTERNATIVE SPLICING</scope>
    <source>
        <strain>Bristol N2</strain>
    </source>
</reference>
<reference key="2">
    <citation type="journal article" date="2010" name="EMBO J.">
        <title>SLR-2 and JMJC-1 regulate an evolutionarily conserved stress-response network.</title>
        <authorList>
            <person name="Kirienko N.V."/>
            <person name="Fay D.S."/>
        </authorList>
    </citation>
    <scope>FUNCTION</scope>
    <scope>DISRUPTION PHENOTYPE</scope>
</reference>
<keyword id="KW-0025">Alternative splicing</keyword>
<keyword id="KW-0156">Chromatin regulator</keyword>
<keyword id="KW-0223">Dioxygenase</keyword>
<keyword id="KW-0408">Iron</keyword>
<keyword id="KW-0479">Metal-binding</keyword>
<keyword id="KW-0539">Nucleus</keyword>
<keyword id="KW-0560">Oxidoreductase</keyword>
<keyword id="KW-1185">Reference proteome</keyword>
<keyword id="KW-0678">Repressor</keyword>
<keyword id="KW-0804">Transcription</keyword>
<keyword id="KW-0805">Transcription regulation</keyword>
<organism>
    <name type="scientific">Caenorhabditis elegans</name>
    <dbReference type="NCBI Taxonomy" id="6239"/>
    <lineage>
        <taxon>Eukaryota</taxon>
        <taxon>Metazoa</taxon>
        <taxon>Ecdysozoa</taxon>
        <taxon>Nematoda</taxon>
        <taxon>Chromadorea</taxon>
        <taxon>Rhabditida</taxon>
        <taxon>Rhabditina</taxon>
        <taxon>Rhabditomorpha</taxon>
        <taxon>Rhabditoidea</taxon>
        <taxon>Rhabditidae</taxon>
        <taxon>Peloderinae</taxon>
        <taxon>Caenorhabditis</taxon>
    </lineage>
</organism>
<gene>
    <name type="primary">jmjc-1</name>
    <name type="ORF">T28F2.4</name>
</gene>
<evidence type="ECO:0000250" key="1"/>
<evidence type="ECO:0000255" key="2">
    <source>
        <dbReference type="PROSITE-ProRule" id="PRU00538"/>
    </source>
</evidence>
<evidence type="ECO:0000256" key="3">
    <source>
        <dbReference type="SAM" id="MobiDB-lite"/>
    </source>
</evidence>
<evidence type="ECO:0000269" key="4">
    <source>
    </source>
</evidence>
<evidence type="ECO:0000305" key="5"/>
<dbReference type="EC" id="1.14.11.-"/>
<dbReference type="EC" id="1.14.11.27"/>
<dbReference type="EMBL" id="FO080999">
    <property type="protein sequence ID" value="CCD68363.1"/>
    <property type="molecule type" value="Genomic_DNA"/>
</dbReference>
<dbReference type="EMBL" id="FO080999">
    <property type="protein sequence ID" value="CCD68364.1"/>
    <property type="molecule type" value="Genomic_DNA"/>
</dbReference>
<dbReference type="PIR" id="T15138">
    <property type="entry name" value="T15138"/>
</dbReference>
<dbReference type="RefSeq" id="NP_001021644.1">
    <molecule id="O01658-1"/>
    <property type="nucleotide sequence ID" value="NM_001026473.7"/>
</dbReference>
<dbReference type="RefSeq" id="NP_001021645.1">
    <molecule id="O01658-2"/>
    <property type="nucleotide sequence ID" value="NM_001026474.4"/>
</dbReference>
<dbReference type="SMR" id="O01658"/>
<dbReference type="BioGRID" id="37407">
    <property type="interactions" value="2"/>
</dbReference>
<dbReference type="FunCoup" id="O01658">
    <property type="interactions" value="2469"/>
</dbReference>
<dbReference type="STRING" id="6239.T28F2.4a.1"/>
<dbReference type="PaxDb" id="6239-T28F2.4a"/>
<dbReference type="PeptideAtlas" id="O01658"/>
<dbReference type="EnsemblMetazoa" id="T28F2.4a.1">
    <molecule id="O01658-1"/>
    <property type="protein sequence ID" value="T28F2.4a.1"/>
    <property type="gene ID" value="WBGene00020902"/>
</dbReference>
<dbReference type="EnsemblMetazoa" id="T28F2.4b.1">
    <molecule id="O01658-2"/>
    <property type="protein sequence ID" value="T28F2.4b.1"/>
    <property type="gene ID" value="WBGene00020902"/>
</dbReference>
<dbReference type="GeneID" id="171932"/>
<dbReference type="KEGG" id="cel:CELE_T28F2.4"/>
<dbReference type="UCSC" id="T28F2.4a">
    <molecule id="O01658-1"/>
    <property type="organism name" value="c. elegans"/>
</dbReference>
<dbReference type="AGR" id="WB:WBGene00020902"/>
<dbReference type="CTD" id="171932"/>
<dbReference type="WormBase" id="T28F2.4a">
    <molecule id="O01658-1"/>
    <property type="protein sequence ID" value="CE28497"/>
    <property type="gene ID" value="WBGene00020902"/>
    <property type="gene designation" value="jmjc-1"/>
</dbReference>
<dbReference type="WormBase" id="T28F2.4b">
    <molecule id="O01658-2"/>
    <property type="protein sequence ID" value="CE37050"/>
    <property type="gene ID" value="WBGene00020902"/>
    <property type="gene designation" value="jmjc-1"/>
</dbReference>
<dbReference type="eggNOG" id="KOG3706">
    <property type="taxonomic scope" value="Eukaryota"/>
</dbReference>
<dbReference type="GeneTree" id="ENSGT00390000000083"/>
<dbReference type="HOGENOM" id="CLU_013645_4_0_1"/>
<dbReference type="InParanoid" id="O01658"/>
<dbReference type="OMA" id="PVFEGWI"/>
<dbReference type="OrthoDB" id="425950at2759"/>
<dbReference type="PhylomeDB" id="O01658"/>
<dbReference type="Reactome" id="R-CEL-9629569">
    <property type="pathway name" value="Protein hydroxylation"/>
</dbReference>
<dbReference type="PRO" id="PR:O01658"/>
<dbReference type="Proteomes" id="UP000001940">
    <property type="component" value="Chromosome I"/>
</dbReference>
<dbReference type="Bgee" id="WBGene00020902">
    <property type="expression patterns" value="Expressed in embryo and 3 other cell types or tissues"/>
</dbReference>
<dbReference type="GO" id="GO:0005730">
    <property type="term" value="C:nucleolus"/>
    <property type="evidence" value="ECO:0000318"/>
    <property type="project" value="GO_Central"/>
</dbReference>
<dbReference type="GO" id="GO:0005634">
    <property type="term" value="C:nucleus"/>
    <property type="evidence" value="ECO:0000250"/>
    <property type="project" value="UniProtKB"/>
</dbReference>
<dbReference type="GO" id="GO:0016706">
    <property type="term" value="F:2-oxoglutarate-dependent dioxygenase activity"/>
    <property type="evidence" value="ECO:0000250"/>
    <property type="project" value="UniProtKB"/>
</dbReference>
<dbReference type="GO" id="GO:0051864">
    <property type="term" value="F:histone H3K36 demethylase activity"/>
    <property type="evidence" value="ECO:0000250"/>
    <property type="project" value="UniProtKB"/>
</dbReference>
<dbReference type="GO" id="GO:0140680">
    <property type="term" value="F:histone H3K36me/H3K36me2 demethylase activity"/>
    <property type="evidence" value="ECO:0007669"/>
    <property type="project" value="UniProtKB-EC"/>
</dbReference>
<dbReference type="GO" id="GO:0032453">
    <property type="term" value="F:histone H3K4 demethylase activity"/>
    <property type="evidence" value="ECO:0000318"/>
    <property type="project" value="GO_Central"/>
</dbReference>
<dbReference type="GO" id="GO:0034647">
    <property type="term" value="F:histone H3K4me/H3K4me2/H3K4me3 demethylase activity"/>
    <property type="evidence" value="ECO:0000250"/>
    <property type="project" value="UniProtKB"/>
</dbReference>
<dbReference type="GO" id="GO:0005506">
    <property type="term" value="F:iron ion binding"/>
    <property type="evidence" value="ECO:0000250"/>
    <property type="project" value="UniProtKB"/>
</dbReference>
<dbReference type="GO" id="GO:0045892">
    <property type="term" value="P:negative regulation of DNA-templated transcription"/>
    <property type="evidence" value="ECO:0000250"/>
    <property type="project" value="UniProtKB"/>
</dbReference>
<dbReference type="GO" id="GO:0045471">
    <property type="term" value="P:response to ethanol"/>
    <property type="evidence" value="ECO:0000315"/>
    <property type="project" value="UniProtKB"/>
</dbReference>
<dbReference type="GO" id="GO:0009408">
    <property type="term" value="P:response to heat"/>
    <property type="evidence" value="ECO:0000315"/>
    <property type="project" value="UniProtKB"/>
</dbReference>
<dbReference type="GO" id="GO:0006970">
    <property type="term" value="P:response to osmotic stress"/>
    <property type="evidence" value="ECO:0000315"/>
    <property type="project" value="UniProtKB"/>
</dbReference>
<dbReference type="GO" id="GO:0006979">
    <property type="term" value="P:response to oxidative stress"/>
    <property type="evidence" value="ECO:0000315"/>
    <property type="project" value="UniProtKB"/>
</dbReference>
<dbReference type="FunFam" id="2.60.120.650:FF:000013">
    <property type="entry name" value="Ribosomal oxygenase 1"/>
    <property type="match status" value="1"/>
</dbReference>
<dbReference type="FunFam" id="1.10.10.1500:FF:000001">
    <property type="entry name" value="ribosomal oxygenase 1 isoform X1"/>
    <property type="match status" value="1"/>
</dbReference>
<dbReference type="FunFam" id="3.90.930.40:FF:000001">
    <property type="entry name" value="ribosomal oxygenase 1 isoform X1"/>
    <property type="match status" value="1"/>
</dbReference>
<dbReference type="Gene3D" id="3.90.930.40">
    <property type="match status" value="1"/>
</dbReference>
<dbReference type="Gene3D" id="2.60.120.650">
    <property type="entry name" value="Cupin"/>
    <property type="match status" value="1"/>
</dbReference>
<dbReference type="Gene3D" id="1.10.10.1500">
    <property type="entry name" value="JmjC domain-containing ribosomal oxygenase (ROX), dimer domain"/>
    <property type="match status" value="1"/>
</dbReference>
<dbReference type="InterPro" id="IPR003347">
    <property type="entry name" value="JmjC_dom"/>
</dbReference>
<dbReference type="InterPro" id="IPR039994">
    <property type="entry name" value="NO66-like"/>
</dbReference>
<dbReference type="InterPro" id="IPR049043">
    <property type="entry name" value="RIOX1/NO66-like_C_WH"/>
</dbReference>
<dbReference type="PANTHER" id="PTHR13096">
    <property type="entry name" value="MINA53 MYC INDUCED NUCLEAR ANTIGEN"/>
    <property type="match status" value="1"/>
</dbReference>
<dbReference type="PANTHER" id="PTHR13096:SF8">
    <property type="entry name" value="RIBOSOMAL OXYGENASE 1"/>
    <property type="match status" value="1"/>
</dbReference>
<dbReference type="Pfam" id="PF08007">
    <property type="entry name" value="JmjC_2"/>
    <property type="match status" value="1"/>
</dbReference>
<dbReference type="Pfam" id="PF21233">
    <property type="entry name" value="RIOX1_C_WH"/>
    <property type="match status" value="1"/>
</dbReference>
<dbReference type="SUPFAM" id="SSF51197">
    <property type="entry name" value="Clavaminate synthase-like"/>
    <property type="match status" value="1"/>
</dbReference>
<dbReference type="PROSITE" id="PS51184">
    <property type="entry name" value="JMJC"/>
    <property type="match status" value="1"/>
</dbReference>
<comment type="function">
    <text evidence="1 4">Oxygenase that can act as both a histone lysine demethylase and a ribosomal histidine hydroxylase. Specifically demethylates 'Lys-4' (H3K4me) and 'Lys-36' (H3K36me) of histone H3, thereby playing a central role in histone code (By similarity). Mediates response to multiple stress stimuli, including heat shock and osmotic, oxidative, and ethanol stress.</text>
</comment>
<comment type="catalytic activity">
    <reaction>
        <text>N(6),N(6)-dimethyl-L-lysyl(36)-[histone H3] + 2 2-oxoglutarate + 2 O2 = L-lysyl(36)-[histone H3] + 2 formaldehyde + 2 succinate + 2 CO2</text>
        <dbReference type="Rhea" id="RHEA:42032"/>
        <dbReference type="Rhea" id="RHEA-COMP:9785"/>
        <dbReference type="Rhea" id="RHEA-COMP:9787"/>
        <dbReference type="ChEBI" id="CHEBI:15379"/>
        <dbReference type="ChEBI" id="CHEBI:16526"/>
        <dbReference type="ChEBI" id="CHEBI:16810"/>
        <dbReference type="ChEBI" id="CHEBI:16842"/>
        <dbReference type="ChEBI" id="CHEBI:29969"/>
        <dbReference type="ChEBI" id="CHEBI:30031"/>
        <dbReference type="ChEBI" id="CHEBI:61976"/>
        <dbReference type="EC" id="1.14.11.27"/>
    </reaction>
</comment>
<comment type="cofactor">
    <cofactor evidence="1">
        <name>Fe(2+)</name>
        <dbReference type="ChEBI" id="CHEBI:29033"/>
    </cofactor>
    <text evidence="1">Binds 1 Fe(2+) ion per subunit.</text>
</comment>
<comment type="subcellular location">
    <subcellularLocation>
        <location evidence="1">Nucleus</location>
    </subcellularLocation>
</comment>
<comment type="alternative products">
    <event type="alternative splicing"/>
    <isoform>
        <id>O01658-1</id>
        <name>a</name>
        <sequence type="displayed"/>
    </isoform>
    <isoform>
        <id>O01658-2</id>
        <name>b</name>
        <sequence type="described" ref="VSP_053839 VSP_053840"/>
    </isoform>
</comment>
<comment type="disruption phenotype">
    <text evidence="4">Attenuated response to heat shock stress and reduced survival after heat shock and oxidative stress.</text>
</comment>
<comment type="similarity">
    <text evidence="5">Belongs to the ROX family. NO66 subfamily.</text>
</comment>